<evidence type="ECO:0000255" key="1"/>
<evidence type="ECO:0000256" key="2">
    <source>
        <dbReference type="SAM" id="MobiDB-lite"/>
    </source>
</evidence>
<evidence type="ECO:0000312" key="3">
    <source>
        <dbReference type="HGNC" id="HGNC:38652"/>
    </source>
</evidence>
<keyword id="KW-0175">Coiled coil</keyword>
<keyword id="KW-1185">Reference proteome</keyword>
<name>GOG8K_HUMAN</name>
<comment type="similarity">
    <text evidence="1">Belongs to the GOLGA8 family.</text>
</comment>
<accession>D6RF30</accession>
<dbReference type="EMBL" id="AC139426">
    <property type="status" value="NOT_ANNOTATED_CDS"/>
    <property type="molecule type" value="Genomic_DNA"/>
</dbReference>
<dbReference type="CCDS" id="CCDS61577.1"/>
<dbReference type="RefSeq" id="NP_001269422.1">
    <property type="nucleotide sequence ID" value="NM_001282493.2"/>
</dbReference>
<dbReference type="SMR" id="D6RF30"/>
<dbReference type="FunCoup" id="D6RF30">
    <property type="interactions" value="46"/>
</dbReference>
<dbReference type="STRING" id="9606.ENSP00000426691"/>
<dbReference type="GlyGen" id="D6RF30">
    <property type="glycosylation" value="1 site"/>
</dbReference>
<dbReference type="iPTMnet" id="D6RF30"/>
<dbReference type="PhosphoSitePlus" id="D6RF30"/>
<dbReference type="BioMuta" id="GOLGA8K"/>
<dbReference type="jPOST" id="D6RF30"/>
<dbReference type="MassIVE" id="D6RF30"/>
<dbReference type="PaxDb" id="9606-ENSP00000426691"/>
<dbReference type="PeptideAtlas" id="D6RF30"/>
<dbReference type="ProteomicsDB" id="14441"/>
<dbReference type="Ensembl" id="ENST00000512626.3">
    <property type="protein sequence ID" value="ENSP00000426691.2"/>
    <property type="gene ID" value="ENSG00000249931.5"/>
</dbReference>
<dbReference type="GeneID" id="653125"/>
<dbReference type="KEGG" id="hsa:653125"/>
<dbReference type="MANE-Select" id="ENST00000512626.3">
    <property type="protein sequence ID" value="ENSP00000426691.2"/>
    <property type="RefSeq nucleotide sequence ID" value="NM_001282493.2"/>
    <property type="RefSeq protein sequence ID" value="NP_001269422.1"/>
</dbReference>
<dbReference type="UCSC" id="uc032byu.2">
    <property type="organism name" value="human"/>
</dbReference>
<dbReference type="AGR" id="HGNC:38652"/>
<dbReference type="CTD" id="653125"/>
<dbReference type="GeneCards" id="GOLGA8K"/>
<dbReference type="HGNC" id="HGNC:38652">
    <property type="gene designation" value="GOLGA8K"/>
</dbReference>
<dbReference type="HPA" id="ENSG00000249931">
    <property type="expression patterns" value="Tissue enriched (testis)"/>
</dbReference>
<dbReference type="neXtProt" id="NX_D6RF30"/>
<dbReference type="OpenTargets" id="ENSG00000249931"/>
<dbReference type="VEuPathDB" id="HostDB:ENSG00000249931"/>
<dbReference type="eggNOG" id="KOG4725">
    <property type="taxonomic scope" value="Eukaryota"/>
</dbReference>
<dbReference type="GeneTree" id="ENSGT00530000062932"/>
<dbReference type="HOGENOM" id="CLU_012403_1_2_1"/>
<dbReference type="InParanoid" id="D6RF30"/>
<dbReference type="OrthoDB" id="9837597at2759"/>
<dbReference type="PAN-GO" id="D6RF30">
    <property type="GO annotations" value="4 GO annotations based on evolutionary models"/>
</dbReference>
<dbReference type="PhylomeDB" id="D6RF30"/>
<dbReference type="Pharos" id="D6RF30">
    <property type="development level" value="Tdark"/>
</dbReference>
<dbReference type="PRO" id="PR:D6RF30"/>
<dbReference type="Proteomes" id="UP000005640">
    <property type="component" value="Chromosome 15"/>
</dbReference>
<dbReference type="RNAct" id="D6RF30">
    <property type="molecule type" value="protein"/>
</dbReference>
<dbReference type="Bgee" id="ENSG00000249931">
    <property type="expression patterns" value="Expressed in right lobe of thyroid gland and 97 other cell types or tissues"/>
</dbReference>
<dbReference type="GO" id="GO:0005801">
    <property type="term" value="C:cis-Golgi network"/>
    <property type="evidence" value="ECO:0000318"/>
    <property type="project" value="GO_Central"/>
</dbReference>
<dbReference type="GO" id="GO:0000137">
    <property type="term" value="C:Golgi cis cisterna"/>
    <property type="evidence" value="ECO:0000318"/>
    <property type="project" value="GO_Central"/>
</dbReference>
<dbReference type="GO" id="GO:0032580">
    <property type="term" value="C:Golgi cisterna membrane"/>
    <property type="evidence" value="ECO:0000318"/>
    <property type="project" value="GO_Central"/>
</dbReference>
<dbReference type="GO" id="GO:0007030">
    <property type="term" value="P:Golgi organization"/>
    <property type="evidence" value="ECO:0000318"/>
    <property type="project" value="GO_Central"/>
</dbReference>
<dbReference type="InterPro" id="IPR043937">
    <property type="entry name" value="GM130_C"/>
</dbReference>
<dbReference type="InterPro" id="IPR043976">
    <property type="entry name" value="GOLGA_cons_dom"/>
</dbReference>
<dbReference type="InterPro" id="IPR024858">
    <property type="entry name" value="Golgin_A"/>
</dbReference>
<dbReference type="PANTHER" id="PTHR10881:SF62">
    <property type="entry name" value="GOLGIN SUBFAMILY A MEMBER 8H-RELATED"/>
    <property type="match status" value="1"/>
</dbReference>
<dbReference type="PANTHER" id="PTHR10881">
    <property type="entry name" value="GOLGIN SUBFAMILY A MEMBER-RELATED"/>
    <property type="match status" value="1"/>
</dbReference>
<dbReference type="Pfam" id="PF19046">
    <property type="entry name" value="GM130_C"/>
    <property type="match status" value="1"/>
</dbReference>
<dbReference type="Pfam" id="PF15070">
    <property type="entry name" value="GOLGA2L5"/>
    <property type="match status" value="2"/>
</dbReference>
<organism>
    <name type="scientific">Homo sapiens</name>
    <name type="common">Human</name>
    <dbReference type="NCBI Taxonomy" id="9606"/>
    <lineage>
        <taxon>Eukaryota</taxon>
        <taxon>Metazoa</taxon>
        <taxon>Chordata</taxon>
        <taxon>Craniata</taxon>
        <taxon>Vertebrata</taxon>
        <taxon>Euteleostomi</taxon>
        <taxon>Mammalia</taxon>
        <taxon>Eutheria</taxon>
        <taxon>Euarchontoglires</taxon>
        <taxon>Primates</taxon>
        <taxon>Haplorrhini</taxon>
        <taxon>Catarrhini</taxon>
        <taxon>Hominidae</taxon>
        <taxon>Homo</taxon>
    </lineage>
</organism>
<proteinExistence type="inferred from homology"/>
<protein>
    <recommendedName>
        <fullName>Golgin subfamily A member 8K</fullName>
    </recommendedName>
</protein>
<gene>
    <name evidence="3" type="primary">GOLGA8K</name>
</gene>
<reference key="1">
    <citation type="journal article" date="2006" name="Nature">
        <title>Analysis of the DNA sequence and duplication history of human chromosome 15.</title>
        <authorList>
            <person name="Zody M.C."/>
            <person name="Garber M."/>
            <person name="Sharpe T."/>
            <person name="Young S.K."/>
            <person name="Rowen L."/>
            <person name="O'Neill K."/>
            <person name="Whittaker C.A."/>
            <person name="Kamal M."/>
            <person name="Chang J.L."/>
            <person name="Cuomo C.A."/>
            <person name="Dewar K."/>
            <person name="FitzGerald M.G."/>
            <person name="Kodira C.D."/>
            <person name="Madan A."/>
            <person name="Qin S."/>
            <person name="Yang X."/>
            <person name="Abbasi N."/>
            <person name="Abouelleil A."/>
            <person name="Arachchi H.M."/>
            <person name="Baradarani L."/>
            <person name="Birditt B."/>
            <person name="Bloom S."/>
            <person name="Bloom T."/>
            <person name="Borowsky M.L."/>
            <person name="Burke J."/>
            <person name="Butler J."/>
            <person name="Cook A."/>
            <person name="DeArellano K."/>
            <person name="DeCaprio D."/>
            <person name="Dorris L. III"/>
            <person name="Dors M."/>
            <person name="Eichler E.E."/>
            <person name="Engels R."/>
            <person name="Fahey J."/>
            <person name="Fleetwood P."/>
            <person name="Friedman C."/>
            <person name="Gearin G."/>
            <person name="Hall J.L."/>
            <person name="Hensley G."/>
            <person name="Johnson E."/>
            <person name="Jones C."/>
            <person name="Kamat A."/>
            <person name="Kaur A."/>
            <person name="Locke D.P."/>
            <person name="Madan A."/>
            <person name="Munson G."/>
            <person name="Jaffe D.B."/>
            <person name="Lui A."/>
            <person name="Macdonald P."/>
            <person name="Mauceli E."/>
            <person name="Naylor J.W."/>
            <person name="Nesbitt R."/>
            <person name="Nicol R."/>
            <person name="O'Leary S.B."/>
            <person name="Ratcliffe A."/>
            <person name="Rounsley S."/>
            <person name="She X."/>
            <person name="Sneddon K.M.B."/>
            <person name="Stewart S."/>
            <person name="Sougnez C."/>
            <person name="Stone S.M."/>
            <person name="Topham K."/>
            <person name="Vincent D."/>
            <person name="Wang S."/>
            <person name="Zimmer A.R."/>
            <person name="Birren B.W."/>
            <person name="Hood L."/>
            <person name="Lander E.S."/>
            <person name="Nusbaum C."/>
        </authorList>
    </citation>
    <scope>NUCLEOTIDE SEQUENCE [LARGE SCALE GENOMIC DNA]</scope>
</reference>
<feature type="chain" id="PRO_0000420859" description="Golgin subfamily A member 8K">
    <location>
        <begin position="1"/>
        <end position="630"/>
    </location>
</feature>
<feature type="region of interest" description="Disordered" evidence="2">
    <location>
        <begin position="1"/>
        <end position="76"/>
    </location>
</feature>
<feature type="region of interest" description="Disordered" evidence="2">
    <location>
        <begin position="352"/>
        <end position="379"/>
    </location>
</feature>
<feature type="region of interest" description="Disordered" evidence="2">
    <location>
        <begin position="424"/>
        <end position="444"/>
    </location>
</feature>
<feature type="coiled-coil region" evidence="1">
    <location>
        <begin position="86"/>
        <end position="148"/>
    </location>
</feature>
<feature type="coiled-coil region" evidence="1">
    <location>
        <begin position="224"/>
        <end position="411"/>
    </location>
</feature>
<feature type="compositionally biased region" description="Basic and acidic residues" evidence="2">
    <location>
        <begin position="352"/>
        <end position="362"/>
    </location>
</feature>
<sequence length="630" mass="71556">MAEETQHNKLAAAKKKLKEYWQKNSPRVPAGANRNRKTNGSIPEKATSGGCQPPRDSATGFHREGPTSSATLKDLESPCQERAVVLDSRSVEISQLKNTIKSLKQQKKQVEHQLEEEKKANNKKQKAKRVLEVQIQTLNIQKEELNTDLYHMKRSLRYFEEKSKDLAVRLQHSLQRKGELESVLSNVMATQKKKANQLSSRSKARTEWKLEQSMREEALLKVQLTQLKESFQQVQLERDEYSEHLKGERARWQQRMRKMSQEICTLKKEKQQDMRRVEKLERSLSKLKNQMAEPLPPEPPAVPSEVELQHLRKELERVAGELQAQVKKNQRISLLNQRQEERIQEQEERLRKQEERIQEQHKSLQQLAKPQSVFEEPNNENKNALQLEQQVKELQEKLGEEHLEAASQQNQQLTAQLSLMALPGEGHGEHLDSEGEEAPQPMPSVPEDLESREAMSSFMDHLKEKADLSELVKKELCFIHHWRDRRHQKTHHLLSEPGGCAKDAALGGGHHQAGAQGGDEGEAAGAAADGIAAYSNYNNGHRKFLAAAHNPADEPGPGAPAPQELGAADKHGDLREVSLTSSAQGEAREDPLLDKPTAQPIVQDHKEHPGLGSNCCVPLFCWAWLPRRRR</sequence>